<name>SMP3_YARLI</name>
<keyword id="KW-0256">Endoplasmic reticulum</keyword>
<keyword id="KW-0325">Glycoprotein</keyword>
<keyword id="KW-0328">Glycosyltransferase</keyword>
<keyword id="KW-0337">GPI-anchor biosynthesis</keyword>
<keyword id="KW-0472">Membrane</keyword>
<keyword id="KW-1185">Reference proteome</keyword>
<keyword id="KW-0808">Transferase</keyword>
<keyword id="KW-0812">Transmembrane</keyword>
<keyword id="KW-1133">Transmembrane helix</keyword>
<comment type="function">
    <text evidence="1">Alpha-1,2-mannosyltransferase involved in glycosylphosphatidylinositol-anchor biosynthesis. Transfers a fourth mannose to trimannosyl-GPIs during GPI precursor assembly. The presence of a fourth mannose in GPI is essential in fungi (By similarity).</text>
</comment>
<comment type="pathway">
    <text>Glycolipid biosynthesis; glycosylphosphatidylinositol-anchor biosynthesis.</text>
</comment>
<comment type="subcellular location">
    <subcellularLocation>
        <location evidence="1">Endoplasmic reticulum membrane</location>
        <topology evidence="1">Multi-pass membrane protein</topology>
    </subcellularLocation>
</comment>
<comment type="similarity">
    <text evidence="3">Belongs to the glycosyltransferase 22 family. PIGZ subfamily.</text>
</comment>
<organism>
    <name type="scientific">Yarrowia lipolytica (strain CLIB 122 / E 150)</name>
    <name type="common">Yeast</name>
    <name type="synonym">Candida lipolytica</name>
    <dbReference type="NCBI Taxonomy" id="284591"/>
    <lineage>
        <taxon>Eukaryota</taxon>
        <taxon>Fungi</taxon>
        <taxon>Dikarya</taxon>
        <taxon>Ascomycota</taxon>
        <taxon>Saccharomycotina</taxon>
        <taxon>Dipodascomycetes</taxon>
        <taxon>Dipodascales</taxon>
        <taxon>Dipodascales incertae sedis</taxon>
        <taxon>Yarrowia</taxon>
    </lineage>
</organism>
<gene>
    <name type="primary">SMP3</name>
    <name type="ordered locus">YALI0C01485g</name>
</gene>
<reference key="1">
    <citation type="journal article" date="2004" name="Nature">
        <title>Genome evolution in yeasts.</title>
        <authorList>
            <person name="Dujon B."/>
            <person name="Sherman D."/>
            <person name="Fischer G."/>
            <person name="Durrens P."/>
            <person name="Casaregola S."/>
            <person name="Lafontaine I."/>
            <person name="de Montigny J."/>
            <person name="Marck C."/>
            <person name="Neuveglise C."/>
            <person name="Talla E."/>
            <person name="Goffard N."/>
            <person name="Frangeul L."/>
            <person name="Aigle M."/>
            <person name="Anthouard V."/>
            <person name="Babour A."/>
            <person name="Barbe V."/>
            <person name="Barnay S."/>
            <person name="Blanchin S."/>
            <person name="Beckerich J.-M."/>
            <person name="Beyne E."/>
            <person name="Bleykasten C."/>
            <person name="Boisrame A."/>
            <person name="Boyer J."/>
            <person name="Cattolico L."/>
            <person name="Confanioleri F."/>
            <person name="de Daruvar A."/>
            <person name="Despons L."/>
            <person name="Fabre E."/>
            <person name="Fairhead C."/>
            <person name="Ferry-Dumazet H."/>
            <person name="Groppi A."/>
            <person name="Hantraye F."/>
            <person name="Hennequin C."/>
            <person name="Jauniaux N."/>
            <person name="Joyet P."/>
            <person name="Kachouri R."/>
            <person name="Kerrest A."/>
            <person name="Koszul R."/>
            <person name="Lemaire M."/>
            <person name="Lesur I."/>
            <person name="Ma L."/>
            <person name="Muller H."/>
            <person name="Nicaud J.-M."/>
            <person name="Nikolski M."/>
            <person name="Oztas S."/>
            <person name="Ozier-Kalogeropoulos O."/>
            <person name="Pellenz S."/>
            <person name="Potier S."/>
            <person name="Richard G.-F."/>
            <person name="Straub M.-L."/>
            <person name="Suleau A."/>
            <person name="Swennen D."/>
            <person name="Tekaia F."/>
            <person name="Wesolowski-Louvel M."/>
            <person name="Westhof E."/>
            <person name="Wirth B."/>
            <person name="Zeniou-Meyer M."/>
            <person name="Zivanovic Y."/>
            <person name="Bolotin-Fukuhara M."/>
            <person name="Thierry A."/>
            <person name="Bouchier C."/>
            <person name="Caudron B."/>
            <person name="Scarpelli C."/>
            <person name="Gaillardin C."/>
            <person name="Weissenbach J."/>
            <person name="Wincker P."/>
            <person name="Souciet J.-L."/>
        </authorList>
    </citation>
    <scope>NUCLEOTIDE SEQUENCE [LARGE SCALE GENOMIC DNA]</scope>
    <source>
        <strain>CLIB 122 / E 150</strain>
    </source>
</reference>
<dbReference type="EC" id="2.4.1.-"/>
<dbReference type="EMBL" id="CR382129">
    <property type="protein sequence ID" value="CAG81628.1"/>
    <property type="molecule type" value="Genomic_DNA"/>
</dbReference>
<dbReference type="RefSeq" id="XP_501332.1">
    <property type="nucleotide sequence ID" value="XM_501332.1"/>
</dbReference>
<dbReference type="FunCoup" id="Q6CDD0">
    <property type="interactions" value="60"/>
</dbReference>
<dbReference type="STRING" id="284591.Q6CDD0"/>
<dbReference type="CAZy" id="GT22">
    <property type="family name" value="Glycosyltransferase Family 22"/>
</dbReference>
<dbReference type="GlyCosmos" id="Q6CDD0">
    <property type="glycosylation" value="2 sites, No reported glycans"/>
</dbReference>
<dbReference type="EnsemblFungi" id="CAG81628">
    <property type="protein sequence ID" value="CAG81628"/>
    <property type="gene ID" value="YALI0_C01485g"/>
</dbReference>
<dbReference type="KEGG" id="yli:2909128"/>
<dbReference type="VEuPathDB" id="FungiDB:YALI0_C01485g"/>
<dbReference type="HOGENOM" id="CLU_022957_2_0_1"/>
<dbReference type="InParanoid" id="Q6CDD0"/>
<dbReference type="OMA" id="GIMHQNG"/>
<dbReference type="OrthoDB" id="86970at4891"/>
<dbReference type="UniPathway" id="UPA00196"/>
<dbReference type="Proteomes" id="UP000001300">
    <property type="component" value="Chromosome C"/>
</dbReference>
<dbReference type="GO" id="GO:0005789">
    <property type="term" value="C:endoplasmic reticulum membrane"/>
    <property type="evidence" value="ECO:0000318"/>
    <property type="project" value="GO_Central"/>
</dbReference>
<dbReference type="GO" id="GO:0000026">
    <property type="term" value="F:alpha-1,2-mannosyltransferase activity"/>
    <property type="evidence" value="ECO:0000318"/>
    <property type="project" value="GO_Central"/>
</dbReference>
<dbReference type="GO" id="GO:0006506">
    <property type="term" value="P:GPI anchor biosynthetic process"/>
    <property type="evidence" value="ECO:0000318"/>
    <property type="project" value="GO_Central"/>
</dbReference>
<dbReference type="InterPro" id="IPR005599">
    <property type="entry name" value="GPI_mannosylTrfase"/>
</dbReference>
<dbReference type="PANTHER" id="PTHR22760">
    <property type="entry name" value="GLYCOSYLTRANSFERASE"/>
    <property type="match status" value="1"/>
</dbReference>
<dbReference type="PANTHER" id="PTHR22760:SF3">
    <property type="entry name" value="GPI MANNOSYLTRANSFERASE 4"/>
    <property type="match status" value="1"/>
</dbReference>
<dbReference type="Pfam" id="PF03901">
    <property type="entry name" value="Glyco_transf_22"/>
    <property type="match status" value="1"/>
</dbReference>
<protein>
    <recommendedName>
        <fullName>GPI mannosyltransferase 4</fullName>
        <ecNumber>2.4.1.-</ecNumber>
    </recommendedName>
    <alternativeName>
        <fullName>GPI mannosyltransferase IV</fullName>
        <shortName>GPI-MT-IV</shortName>
    </alternativeName>
</protein>
<accession>Q6CDD0</accession>
<evidence type="ECO:0000250" key="1"/>
<evidence type="ECO:0000255" key="2"/>
<evidence type="ECO:0000305" key="3"/>
<feature type="chain" id="PRO_0000246280" description="GPI mannosyltransferase 4">
    <location>
        <begin position="1"/>
        <end position="510"/>
    </location>
</feature>
<feature type="transmembrane region" description="Helical" evidence="2">
    <location>
        <begin position="7"/>
        <end position="27"/>
    </location>
</feature>
<feature type="transmembrane region" description="Helical" evidence="2">
    <location>
        <begin position="62"/>
        <end position="82"/>
    </location>
</feature>
<feature type="transmembrane region" description="Helical" evidence="2">
    <location>
        <begin position="89"/>
        <end position="109"/>
    </location>
</feature>
<feature type="transmembrane region" description="Helical" evidence="2">
    <location>
        <begin position="179"/>
        <end position="199"/>
    </location>
</feature>
<feature type="transmembrane region" description="Helical" evidence="2">
    <location>
        <begin position="213"/>
        <end position="233"/>
    </location>
</feature>
<feature type="transmembrane region" description="Helical" evidence="2">
    <location>
        <begin position="268"/>
        <end position="288"/>
    </location>
</feature>
<feature type="transmembrane region" description="Helical" evidence="2">
    <location>
        <begin position="339"/>
        <end position="359"/>
    </location>
</feature>
<feature type="glycosylation site" description="N-linked (GlcNAc...) asparagine" evidence="2">
    <location>
        <position position="142"/>
    </location>
</feature>
<feature type="glycosylation site" description="N-linked (GlcNAc...) asparagine" evidence="2">
    <location>
        <position position="212"/>
    </location>
</feature>
<sequence>MIWNNRLILALSLLLRLHLAISPSYIHPDEHFQGPEYALGNLFDWAHETTWEFRGDSPIRSFVPLWILYTAPLSVLNFLWKGQLSPREAYWFIRAGHALAYWILGDMALDRLSDSKKSKTKTLYLVGCSYVTWSYQSHTFSNSTETLLVLWCLVIIKESQQRHSMHHQRVHKFMDAGLLGLLIVIGTWNRVTFPLWLIVPGLTYLRKYLIHNISSLILLIASVALTAFFVIHVDSVHYDLEWTITPLNSFLYNSQGHNLAEHGIHNRLTHLVSNLPVLLGPLLILLRTPSQYWKSLQFQSAISGVFFLSLFPHQEARFLMPAVPLLISCYDINAVPRRFTSAIFLLSYVFNIIMGFLMGTLHQGGVVPAQHYLSKHVDSGSHTVVYWRTYKPPSWLLGIPEGELEILDKDHPLGTNLFKRVTDEIENIQIRHKKTMVTVLDLMGSSPEYVNDVIAALAPINPLLVAPVAGLKELDLPAYKEVWKTRFHLGLDHIDGLESLEPGLVVLEVL</sequence>
<proteinExistence type="inferred from homology"/>